<dbReference type="EMBL" id="CU928146">
    <property type="protein sequence ID" value="CAQ87088.1"/>
    <property type="molecule type" value="Genomic_DNA"/>
</dbReference>
<dbReference type="RefSeq" id="WP_001318207.1">
    <property type="nucleotide sequence ID" value="NC_011747.1"/>
</dbReference>
<dbReference type="PDB" id="5A43">
    <property type="method" value="X-ray"/>
    <property type="resolution" value="2.58 A"/>
    <property type="chains" value="A/B=1-126"/>
</dbReference>
<dbReference type="PDBsum" id="5A43"/>
<dbReference type="SMR" id="B7LI20"/>
<dbReference type="DIP" id="DIP-61784N"/>
<dbReference type="ABCD" id="B7LI20">
    <property type="antibodies" value="7 sequenced antibodies"/>
</dbReference>
<dbReference type="KEGG" id="ecz:ECS88_p0015"/>
<dbReference type="EvolutionaryTrace" id="B7LI20"/>
<dbReference type="Proteomes" id="UP000000747">
    <property type="component" value="Plasmid pECOS88"/>
</dbReference>
<dbReference type="GO" id="GO:0005886">
    <property type="term" value="C:plasma membrane"/>
    <property type="evidence" value="ECO:0007669"/>
    <property type="project" value="UniProtKB-SubCell"/>
</dbReference>
<dbReference type="GO" id="GO:0062054">
    <property type="term" value="F:fluoride channel activity"/>
    <property type="evidence" value="ECO:0007669"/>
    <property type="project" value="UniProtKB-UniRule"/>
</dbReference>
<dbReference type="GO" id="GO:0046872">
    <property type="term" value="F:metal ion binding"/>
    <property type="evidence" value="ECO:0007669"/>
    <property type="project" value="UniProtKB-KW"/>
</dbReference>
<dbReference type="GO" id="GO:0140114">
    <property type="term" value="P:cellular detoxification of fluoride"/>
    <property type="evidence" value="ECO:0007669"/>
    <property type="project" value="UniProtKB-UniRule"/>
</dbReference>
<dbReference type="HAMAP" id="MF_00454">
    <property type="entry name" value="FluC"/>
    <property type="match status" value="1"/>
</dbReference>
<dbReference type="InterPro" id="IPR003691">
    <property type="entry name" value="FluC"/>
</dbReference>
<dbReference type="NCBIfam" id="TIGR00494">
    <property type="entry name" value="crcB"/>
    <property type="match status" value="1"/>
</dbReference>
<dbReference type="NCBIfam" id="NF010792">
    <property type="entry name" value="PRK14196.1"/>
    <property type="match status" value="1"/>
</dbReference>
<dbReference type="PANTHER" id="PTHR28259">
    <property type="entry name" value="FLUORIDE EXPORT PROTEIN 1-RELATED"/>
    <property type="match status" value="1"/>
</dbReference>
<dbReference type="PANTHER" id="PTHR28259:SF1">
    <property type="entry name" value="FLUORIDE EXPORT PROTEIN 1-RELATED"/>
    <property type="match status" value="1"/>
</dbReference>
<dbReference type="Pfam" id="PF02537">
    <property type="entry name" value="CRCB"/>
    <property type="match status" value="1"/>
</dbReference>
<accession>B7LI20</accession>
<evidence type="ECO:0000255" key="1">
    <source>
        <dbReference type="HAMAP-Rule" id="MF_00454"/>
    </source>
</evidence>
<evidence type="ECO:0000269" key="2">
    <source>
    </source>
</evidence>
<evidence type="ECO:0000305" key="3"/>
<evidence type="ECO:0000312" key="4">
    <source>
        <dbReference type="EMBL" id="CAQ87088.1"/>
    </source>
</evidence>
<evidence type="ECO:0007744" key="5">
    <source>
        <dbReference type="PDB" id="5A43"/>
    </source>
</evidence>
<evidence type="ECO:0007829" key="6">
    <source>
        <dbReference type="PDB" id="5A43"/>
    </source>
</evidence>
<sequence>MIKSLFAVIIGGSVGCTLRWLLSTRFNSLFPNLPPGTLVVNLLAGLIIGTALAYFLRQPHLDPFWKLMITTGLCGGLSTFSTFSVEVFALLQAGNYIWALTSVLVHVIGSLIMTALGFFIITILFA</sequence>
<keyword id="KW-0002">3D-structure</keyword>
<keyword id="KW-0997">Cell inner membrane</keyword>
<keyword id="KW-1003">Cell membrane</keyword>
<keyword id="KW-0407">Ion channel</keyword>
<keyword id="KW-0406">Ion transport</keyword>
<keyword id="KW-0472">Membrane</keyword>
<keyword id="KW-0479">Metal-binding</keyword>
<keyword id="KW-0614">Plasmid</keyword>
<keyword id="KW-1185">Reference proteome</keyword>
<keyword id="KW-0915">Sodium</keyword>
<keyword id="KW-0812">Transmembrane</keyword>
<keyword id="KW-1133">Transmembrane helix</keyword>
<keyword id="KW-0813">Transport</keyword>
<feature type="chain" id="PRO_0000458414" description="Fluoride-specific ion channel FluC">
    <location>
        <begin position="1"/>
        <end position="126"/>
    </location>
</feature>
<feature type="transmembrane region" description="Helical" evidence="2 5">
    <location>
        <begin position="4"/>
        <end position="27"/>
    </location>
</feature>
<feature type="transmembrane region" description="Helical" evidence="2 5">
    <location>
        <begin position="32"/>
        <end position="55"/>
    </location>
</feature>
<feature type="transmembrane region" description="Helical" evidence="2 5">
    <location>
        <begin position="64"/>
        <end position="92"/>
    </location>
</feature>
<feature type="transmembrane region" description="Helical" evidence="2 5">
    <location>
        <begin position="96"/>
        <end position="121"/>
    </location>
</feature>
<feature type="binding site" evidence="2 5">
    <location>
        <position position="41"/>
    </location>
    <ligand>
        <name>fluoride</name>
        <dbReference type="ChEBI" id="CHEBI:17051"/>
    </ligand>
</feature>
<feature type="binding site" evidence="2 5">
    <location>
        <position position="75"/>
    </location>
    <ligand>
        <name>Na(+)</name>
        <dbReference type="ChEBI" id="CHEBI:29101"/>
        <note>structural; ligand shared between homodimeric partners</note>
    </ligand>
</feature>
<feature type="binding site" evidence="2 5">
    <location>
        <position position="78"/>
    </location>
    <ligand>
        <name>Na(+)</name>
        <dbReference type="ChEBI" id="CHEBI:29101"/>
        <note>structural; ligand shared between homodimeric partners</note>
    </ligand>
</feature>
<feature type="binding site" evidence="2 5">
    <location>
        <position position="110"/>
    </location>
    <ligand>
        <name>fluoride</name>
        <dbReference type="ChEBI" id="CHEBI:17051"/>
    </ligand>
</feature>
<feature type="helix" evidence="6">
    <location>
        <begin position="4"/>
        <end position="26"/>
    </location>
</feature>
<feature type="helix" evidence="6">
    <location>
        <begin position="27"/>
        <end position="29"/>
    </location>
</feature>
<feature type="helix" evidence="6">
    <location>
        <begin position="35"/>
        <end position="56"/>
    </location>
</feature>
<feature type="helix" evidence="6">
    <location>
        <begin position="63"/>
        <end position="69"/>
    </location>
</feature>
<feature type="turn" evidence="6">
    <location>
        <begin position="70"/>
        <end position="72"/>
    </location>
</feature>
<feature type="helix" evidence="6">
    <location>
        <begin position="73"/>
        <end position="77"/>
    </location>
</feature>
<feature type="helix" evidence="6">
    <location>
        <begin position="81"/>
        <end position="92"/>
    </location>
</feature>
<feature type="helix" evidence="6">
    <location>
        <begin position="96"/>
        <end position="122"/>
    </location>
</feature>
<reference key="1">
    <citation type="journal article" date="2009" name="PLoS Genet.">
        <title>Organised genome dynamics in the Escherichia coli species results in highly diverse adaptive paths.</title>
        <authorList>
            <person name="Touchon M."/>
            <person name="Hoede C."/>
            <person name="Tenaillon O."/>
            <person name="Barbe V."/>
            <person name="Baeriswyl S."/>
            <person name="Bidet P."/>
            <person name="Bingen E."/>
            <person name="Bonacorsi S."/>
            <person name="Bouchier C."/>
            <person name="Bouvet O."/>
            <person name="Calteau A."/>
            <person name="Chiapello H."/>
            <person name="Clermont O."/>
            <person name="Cruveiller S."/>
            <person name="Danchin A."/>
            <person name="Diard M."/>
            <person name="Dossat C."/>
            <person name="Karoui M.E."/>
            <person name="Frapy E."/>
            <person name="Garry L."/>
            <person name="Ghigo J.M."/>
            <person name="Gilles A.M."/>
            <person name="Johnson J."/>
            <person name="Le Bouguenec C."/>
            <person name="Lescat M."/>
            <person name="Mangenot S."/>
            <person name="Martinez-Jehanne V."/>
            <person name="Matic I."/>
            <person name="Nassif X."/>
            <person name="Oztas S."/>
            <person name="Petit M.A."/>
            <person name="Pichon C."/>
            <person name="Rouy Z."/>
            <person name="Ruf C.S."/>
            <person name="Schneider D."/>
            <person name="Tourret J."/>
            <person name="Vacherie B."/>
            <person name="Vallenet D."/>
            <person name="Medigue C."/>
            <person name="Rocha E.P.C."/>
            <person name="Denamur E."/>
        </authorList>
    </citation>
    <scope>NUCLEOTIDE SEQUENCE [LARGE SCALE GENOMIC DNA]</scope>
    <source>
        <strain>S88 / ExPEC</strain>
    </source>
</reference>
<reference evidence="5" key="2">
    <citation type="journal article" date="2015" name="Nature">
        <title>Crystal structures of a double-barrelled fluoride ion channel.</title>
        <authorList>
            <person name="Stockbridge R.B."/>
            <person name="Kolmakova-Partensky L."/>
            <person name="Shane T."/>
            <person name="Koide A."/>
            <person name="Koide S."/>
            <person name="Miller C."/>
            <person name="Newstead S."/>
        </authorList>
    </citation>
    <scope>X-RAY CRYSTALLOGRAPHY (2.58 ANGSTROMS) IN COMPLEX WITH FLUORIDE; SODIUM AND MONOBODY INHIBITOR</scope>
    <scope>SUBUNIT</scope>
    <scope>SUBCELLULAR LOCATION</scope>
    <scope>TOPOLOGY</scope>
    <scope>DOMAIN</scope>
</reference>
<gene>
    <name evidence="1" type="primary">fluC</name>
    <name evidence="1" type="synonym">crcB</name>
    <name evidence="4" type="ordered locus">ECS88_p0015</name>
</gene>
<organism>
    <name type="scientific">Escherichia coli O45:K1 (strain S88 / ExPEC)</name>
    <dbReference type="NCBI Taxonomy" id="585035"/>
    <lineage>
        <taxon>Bacteria</taxon>
        <taxon>Pseudomonadati</taxon>
        <taxon>Pseudomonadota</taxon>
        <taxon>Gammaproteobacteria</taxon>
        <taxon>Enterobacterales</taxon>
        <taxon>Enterobacteriaceae</taxon>
        <taxon>Escherichia</taxon>
    </lineage>
</organism>
<geneLocation type="plasmid">
    <name>pECOS88</name>
</geneLocation>
<protein>
    <recommendedName>
        <fullName evidence="1 3">Fluoride-specific ion channel FluC</fullName>
    </recommendedName>
</protein>
<name>FLUC_ECO45</name>
<comment type="function">
    <text evidence="1">Fluoride-specific ion channel. Important for reducing fluoride concentration in the cell, thus reducing its toxicity.</text>
</comment>
<comment type="catalytic activity">
    <reaction evidence="1">
        <text>fluoride(in) = fluoride(out)</text>
        <dbReference type="Rhea" id="RHEA:76159"/>
        <dbReference type="ChEBI" id="CHEBI:17051"/>
    </reaction>
    <physiologicalReaction direction="left-to-right" evidence="1">
        <dbReference type="Rhea" id="RHEA:76160"/>
    </physiologicalReaction>
</comment>
<comment type="activity regulation">
    <text evidence="1">Na(+) is not transported, but it plays an essential structural role and its presence is essential for fluoride channel function.</text>
</comment>
<comment type="subunit">
    <text evidence="2">Homodimer.</text>
</comment>
<comment type="subcellular location">
    <subcellularLocation>
        <location evidence="1">Cell inner membrane</location>
        <topology evidence="1 2">Multi-pass membrane protein</topology>
    </subcellularLocation>
    <text evidence="2">Exhibits a dual-topology architecture: the two subunits are oriented antiparallel to each other within the membrane.</text>
</comment>
<comment type="domain">
    <text evidence="2">Shows a double-barrelled channel architecture in which two fluoride ion pathways span the membrane, and the dual-topology arrangement includes a centrally coordinated Na(+) cation (PubMed:26344196). The Na(+) ion is probably an important structural element stabilizing the dimer interface (PubMed:26344196).</text>
</comment>
<comment type="similarity">
    <text evidence="1 3">Belongs to the fluoride channel Fluc/FEX (TC 1.A.43) family.</text>
</comment>
<proteinExistence type="evidence at protein level"/>